<reference key="1">
    <citation type="journal article" date="2001" name="Proc. Natl. Acad. Sci. U.S.A.">
        <title>Complete genome sequence of Caulobacter crescentus.</title>
        <authorList>
            <person name="Nierman W.C."/>
            <person name="Feldblyum T.V."/>
            <person name="Laub M.T."/>
            <person name="Paulsen I.T."/>
            <person name="Nelson K.E."/>
            <person name="Eisen J.A."/>
            <person name="Heidelberg J.F."/>
            <person name="Alley M.R.K."/>
            <person name="Ohta N."/>
            <person name="Maddock J.R."/>
            <person name="Potocka I."/>
            <person name="Nelson W.C."/>
            <person name="Newton A."/>
            <person name="Stephens C."/>
            <person name="Phadke N.D."/>
            <person name="Ely B."/>
            <person name="DeBoy R.T."/>
            <person name="Dodson R.J."/>
            <person name="Durkin A.S."/>
            <person name="Gwinn M.L."/>
            <person name="Haft D.H."/>
            <person name="Kolonay J.F."/>
            <person name="Smit J."/>
            <person name="Craven M.B."/>
            <person name="Khouri H.M."/>
            <person name="Shetty J."/>
            <person name="Berry K.J."/>
            <person name="Utterback T.R."/>
            <person name="Tran K."/>
            <person name="Wolf A.M."/>
            <person name="Vamathevan J.J."/>
            <person name="Ermolaeva M.D."/>
            <person name="White O."/>
            <person name="Salzberg S.L."/>
            <person name="Venter J.C."/>
            <person name="Shapiro L."/>
            <person name="Fraser C.M."/>
        </authorList>
    </citation>
    <scope>NUCLEOTIDE SEQUENCE [LARGE SCALE GENOMIC DNA]</scope>
    <source>
        <strain>ATCC 19089 / CIP 103742 / CB 15</strain>
    </source>
</reference>
<organism>
    <name type="scientific">Caulobacter vibrioides (strain ATCC 19089 / CIP 103742 / CB 15)</name>
    <name type="common">Caulobacter crescentus</name>
    <dbReference type="NCBI Taxonomy" id="190650"/>
    <lineage>
        <taxon>Bacteria</taxon>
        <taxon>Pseudomonadati</taxon>
        <taxon>Pseudomonadota</taxon>
        <taxon>Alphaproteobacteria</taxon>
        <taxon>Caulobacterales</taxon>
        <taxon>Caulobacteraceae</taxon>
        <taxon>Caulobacter</taxon>
    </lineage>
</organism>
<name>IHFA_CAUVC</name>
<accession>Q9A8I3</accession>
<keyword id="KW-0233">DNA recombination</keyword>
<keyword id="KW-0238">DNA-binding</keyword>
<keyword id="KW-1185">Reference proteome</keyword>
<keyword id="KW-0804">Transcription</keyword>
<keyword id="KW-0805">Transcription regulation</keyword>
<keyword id="KW-0810">Translation regulation</keyword>
<dbReference type="EMBL" id="AE005673">
    <property type="protein sequence ID" value="AAK23351.1"/>
    <property type="molecule type" value="Genomic_DNA"/>
</dbReference>
<dbReference type="PIR" id="C87419">
    <property type="entry name" value="C87419"/>
</dbReference>
<dbReference type="RefSeq" id="NP_420183.1">
    <property type="nucleotide sequence ID" value="NC_002696.2"/>
</dbReference>
<dbReference type="RefSeq" id="WP_010919247.1">
    <property type="nucleotide sequence ID" value="NC_002696.2"/>
</dbReference>
<dbReference type="SMR" id="Q9A8I3"/>
<dbReference type="STRING" id="190650.CC_1370"/>
<dbReference type="EnsemblBacteria" id="AAK23351">
    <property type="protein sequence ID" value="AAK23351"/>
    <property type="gene ID" value="CC_1370"/>
</dbReference>
<dbReference type="KEGG" id="ccr:CC_1370"/>
<dbReference type="PATRIC" id="fig|190650.5.peg.1400"/>
<dbReference type="eggNOG" id="COG0776">
    <property type="taxonomic scope" value="Bacteria"/>
</dbReference>
<dbReference type="HOGENOM" id="CLU_105066_1_1_5"/>
<dbReference type="BioCyc" id="CAULO:CC1370-MONOMER"/>
<dbReference type="Proteomes" id="UP000001816">
    <property type="component" value="Chromosome"/>
</dbReference>
<dbReference type="GO" id="GO:0005829">
    <property type="term" value="C:cytosol"/>
    <property type="evidence" value="ECO:0007669"/>
    <property type="project" value="TreeGrafter"/>
</dbReference>
<dbReference type="GO" id="GO:0003677">
    <property type="term" value="F:DNA binding"/>
    <property type="evidence" value="ECO:0007669"/>
    <property type="project" value="UniProtKB-UniRule"/>
</dbReference>
<dbReference type="GO" id="GO:0030527">
    <property type="term" value="F:structural constituent of chromatin"/>
    <property type="evidence" value="ECO:0007669"/>
    <property type="project" value="InterPro"/>
</dbReference>
<dbReference type="GO" id="GO:0006310">
    <property type="term" value="P:DNA recombination"/>
    <property type="evidence" value="ECO:0007669"/>
    <property type="project" value="UniProtKB-UniRule"/>
</dbReference>
<dbReference type="GO" id="GO:0009893">
    <property type="term" value="P:positive regulation of metabolic process"/>
    <property type="evidence" value="ECO:0007669"/>
    <property type="project" value="UniProtKB-ARBA"/>
</dbReference>
<dbReference type="GO" id="GO:0006355">
    <property type="term" value="P:regulation of DNA-templated transcription"/>
    <property type="evidence" value="ECO:0007669"/>
    <property type="project" value="UniProtKB-UniRule"/>
</dbReference>
<dbReference type="GO" id="GO:0006417">
    <property type="term" value="P:regulation of translation"/>
    <property type="evidence" value="ECO:0007669"/>
    <property type="project" value="UniProtKB-UniRule"/>
</dbReference>
<dbReference type="CDD" id="cd13835">
    <property type="entry name" value="IHF_A"/>
    <property type="match status" value="1"/>
</dbReference>
<dbReference type="Gene3D" id="4.10.520.10">
    <property type="entry name" value="IHF-like DNA-binding proteins"/>
    <property type="match status" value="1"/>
</dbReference>
<dbReference type="HAMAP" id="MF_00380">
    <property type="entry name" value="IHF_alpha"/>
    <property type="match status" value="1"/>
</dbReference>
<dbReference type="InterPro" id="IPR000119">
    <property type="entry name" value="Hist_DNA-bd"/>
</dbReference>
<dbReference type="InterPro" id="IPR020816">
    <property type="entry name" value="Histone-like_DNA-bd_CS"/>
</dbReference>
<dbReference type="InterPro" id="IPR010992">
    <property type="entry name" value="IHF-like_DNA-bd_dom_sf"/>
</dbReference>
<dbReference type="InterPro" id="IPR005684">
    <property type="entry name" value="IHF_alpha"/>
</dbReference>
<dbReference type="NCBIfam" id="NF001401">
    <property type="entry name" value="PRK00285.1"/>
    <property type="match status" value="1"/>
</dbReference>
<dbReference type="PANTHER" id="PTHR33175">
    <property type="entry name" value="DNA-BINDING PROTEIN HU"/>
    <property type="match status" value="1"/>
</dbReference>
<dbReference type="PANTHER" id="PTHR33175:SF2">
    <property type="entry name" value="INTEGRATION HOST FACTOR SUBUNIT ALPHA"/>
    <property type="match status" value="1"/>
</dbReference>
<dbReference type="Pfam" id="PF00216">
    <property type="entry name" value="Bac_DNA_binding"/>
    <property type="match status" value="1"/>
</dbReference>
<dbReference type="PRINTS" id="PR01727">
    <property type="entry name" value="DNABINDINGHU"/>
</dbReference>
<dbReference type="SMART" id="SM00411">
    <property type="entry name" value="BHL"/>
    <property type="match status" value="1"/>
</dbReference>
<dbReference type="SUPFAM" id="SSF47729">
    <property type="entry name" value="IHF-like DNA-binding proteins"/>
    <property type="match status" value="1"/>
</dbReference>
<dbReference type="PROSITE" id="PS00045">
    <property type="entry name" value="HISTONE_LIKE"/>
    <property type="match status" value="1"/>
</dbReference>
<gene>
    <name evidence="1" type="primary">ihfA</name>
    <name evidence="1" type="synonym">himA</name>
    <name type="ordered locus">CC_1370</name>
</gene>
<proteinExistence type="inferred from homology"/>
<protein>
    <recommendedName>
        <fullName evidence="1">Integration host factor subunit alpha</fullName>
        <shortName evidence="1">IHF-alpha</shortName>
    </recommendedName>
</protein>
<sequence>MKGATLTRADLCEAVHEEVGLTRQDCAGLVERTLDLVAEALEQGETVKLSGFGVFQVRAKRARMGRNPKTGEPAEIEPRRVIGFRASQVMKARIDRALGG</sequence>
<evidence type="ECO:0000255" key="1">
    <source>
        <dbReference type="HAMAP-Rule" id="MF_00380"/>
    </source>
</evidence>
<comment type="function">
    <text evidence="1">This protein is one of the two subunits of integration host factor, a specific DNA-binding protein that functions in genetic recombination as well as in transcriptional and translational control.</text>
</comment>
<comment type="subunit">
    <text evidence="1">Heterodimer of an alpha and a beta chain.</text>
</comment>
<comment type="similarity">
    <text evidence="1">Belongs to the bacterial histone-like protein family.</text>
</comment>
<feature type="chain" id="PRO_1000060538" description="Integration host factor subunit alpha">
    <location>
        <begin position="1"/>
        <end position="100"/>
    </location>
</feature>